<keyword id="KW-0687">Ribonucleoprotein</keyword>
<keyword id="KW-0689">Ribosomal protein</keyword>
<keyword id="KW-0694">RNA-binding</keyword>
<keyword id="KW-0699">rRNA-binding</keyword>
<keyword id="KW-0820">tRNA-binding</keyword>
<organism>
    <name type="scientific">Burkholderia ambifaria (strain MC40-6)</name>
    <dbReference type="NCBI Taxonomy" id="398577"/>
    <lineage>
        <taxon>Bacteria</taxon>
        <taxon>Pseudomonadati</taxon>
        <taxon>Pseudomonadota</taxon>
        <taxon>Betaproteobacteria</taxon>
        <taxon>Burkholderiales</taxon>
        <taxon>Burkholderiaceae</taxon>
        <taxon>Burkholderia</taxon>
        <taxon>Burkholderia cepacia complex</taxon>
    </lineage>
</organism>
<accession>B1YRP1</accession>
<protein>
    <recommendedName>
        <fullName evidence="1">Large ribosomal subunit protein uL5</fullName>
    </recommendedName>
    <alternativeName>
        <fullName evidence="2">50S ribosomal protein L5</fullName>
    </alternativeName>
</protein>
<gene>
    <name evidence="1" type="primary">rplE</name>
    <name type="ordered locus">BamMC406_0288</name>
</gene>
<reference key="1">
    <citation type="submission" date="2008-04" db="EMBL/GenBank/DDBJ databases">
        <title>Complete sequence of chromosome 1 of Burkholderia ambifaria MC40-6.</title>
        <authorList>
            <person name="Copeland A."/>
            <person name="Lucas S."/>
            <person name="Lapidus A."/>
            <person name="Glavina del Rio T."/>
            <person name="Dalin E."/>
            <person name="Tice H."/>
            <person name="Pitluck S."/>
            <person name="Chain P."/>
            <person name="Malfatti S."/>
            <person name="Shin M."/>
            <person name="Vergez L."/>
            <person name="Lang D."/>
            <person name="Schmutz J."/>
            <person name="Larimer F."/>
            <person name="Land M."/>
            <person name="Hauser L."/>
            <person name="Kyrpides N."/>
            <person name="Lykidis A."/>
            <person name="Ramette A."/>
            <person name="Konstantinidis K."/>
            <person name="Tiedje J."/>
            <person name="Richardson P."/>
        </authorList>
    </citation>
    <scope>NUCLEOTIDE SEQUENCE [LARGE SCALE GENOMIC DNA]</scope>
    <source>
        <strain>MC40-6</strain>
    </source>
</reference>
<dbReference type="EMBL" id="CP001025">
    <property type="protein sequence ID" value="ACB62789.1"/>
    <property type="molecule type" value="Genomic_DNA"/>
</dbReference>
<dbReference type="RefSeq" id="WP_006482882.1">
    <property type="nucleotide sequence ID" value="NC_010551.1"/>
</dbReference>
<dbReference type="SMR" id="B1YRP1"/>
<dbReference type="GeneID" id="98107148"/>
<dbReference type="KEGG" id="bac:BamMC406_0288"/>
<dbReference type="HOGENOM" id="CLU_061015_2_1_4"/>
<dbReference type="OrthoDB" id="9806626at2"/>
<dbReference type="Proteomes" id="UP000001680">
    <property type="component" value="Chromosome 1"/>
</dbReference>
<dbReference type="GO" id="GO:1990904">
    <property type="term" value="C:ribonucleoprotein complex"/>
    <property type="evidence" value="ECO:0007669"/>
    <property type="project" value="UniProtKB-KW"/>
</dbReference>
<dbReference type="GO" id="GO:0005840">
    <property type="term" value="C:ribosome"/>
    <property type="evidence" value="ECO:0007669"/>
    <property type="project" value="UniProtKB-KW"/>
</dbReference>
<dbReference type="GO" id="GO:0019843">
    <property type="term" value="F:rRNA binding"/>
    <property type="evidence" value="ECO:0007669"/>
    <property type="project" value="UniProtKB-UniRule"/>
</dbReference>
<dbReference type="GO" id="GO:0003735">
    <property type="term" value="F:structural constituent of ribosome"/>
    <property type="evidence" value="ECO:0007669"/>
    <property type="project" value="InterPro"/>
</dbReference>
<dbReference type="GO" id="GO:0000049">
    <property type="term" value="F:tRNA binding"/>
    <property type="evidence" value="ECO:0007669"/>
    <property type="project" value="UniProtKB-UniRule"/>
</dbReference>
<dbReference type="GO" id="GO:0006412">
    <property type="term" value="P:translation"/>
    <property type="evidence" value="ECO:0007669"/>
    <property type="project" value="UniProtKB-UniRule"/>
</dbReference>
<dbReference type="FunFam" id="3.30.1440.10:FF:000001">
    <property type="entry name" value="50S ribosomal protein L5"/>
    <property type="match status" value="1"/>
</dbReference>
<dbReference type="Gene3D" id="3.30.1440.10">
    <property type="match status" value="1"/>
</dbReference>
<dbReference type="HAMAP" id="MF_01333_B">
    <property type="entry name" value="Ribosomal_uL5_B"/>
    <property type="match status" value="1"/>
</dbReference>
<dbReference type="InterPro" id="IPR002132">
    <property type="entry name" value="Ribosomal_uL5"/>
</dbReference>
<dbReference type="InterPro" id="IPR020930">
    <property type="entry name" value="Ribosomal_uL5_bac-type"/>
</dbReference>
<dbReference type="InterPro" id="IPR031309">
    <property type="entry name" value="Ribosomal_uL5_C"/>
</dbReference>
<dbReference type="InterPro" id="IPR020929">
    <property type="entry name" value="Ribosomal_uL5_CS"/>
</dbReference>
<dbReference type="InterPro" id="IPR022803">
    <property type="entry name" value="Ribosomal_uL5_dom_sf"/>
</dbReference>
<dbReference type="InterPro" id="IPR031310">
    <property type="entry name" value="Ribosomal_uL5_N"/>
</dbReference>
<dbReference type="NCBIfam" id="NF000585">
    <property type="entry name" value="PRK00010.1"/>
    <property type="match status" value="1"/>
</dbReference>
<dbReference type="PANTHER" id="PTHR11994">
    <property type="entry name" value="60S RIBOSOMAL PROTEIN L11-RELATED"/>
    <property type="match status" value="1"/>
</dbReference>
<dbReference type="Pfam" id="PF00281">
    <property type="entry name" value="Ribosomal_L5"/>
    <property type="match status" value="1"/>
</dbReference>
<dbReference type="Pfam" id="PF00673">
    <property type="entry name" value="Ribosomal_L5_C"/>
    <property type="match status" value="1"/>
</dbReference>
<dbReference type="PIRSF" id="PIRSF002161">
    <property type="entry name" value="Ribosomal_L5"/>
    <property type="match status" value="1"/>
</dbReference>
<dbReference type="SUPFAM" id="SSF55282">
    <property type="entry name" value="RL5-like"/>
    <property type="match status" value="1"/>
</dbReference>
<dbReference type="PROSITE" id="PS00358">
    <property type="entry name" value="RIBOSOMAL_L5"/>
    <property type="match status" value="1"/>
</dbReference>
<comment type="function">
    <text evidence="1">This is one of the proteins that bind and probably mediate the attachment of the 5S RNA into the large ribosomal subunit, where it forms part of the central protuberance. In the 70S ribosome it contacts protein S13 of the 30S subunit (bridge B1b), connecting the 2 subunits; this bridge is implicated in subunit movement. Contacts the P site tRNA; the 5S rRNA and some of its associated proteins might help stabilize positioning of ribosome-bound tRNAs.</text>
</comment>
<comment type="subunit">
    <text evidence="1">Part of the 50S ribosomal subunit; part of the 5S rRNA/L5/L18/L25 subcomplex. Contacts the 5S rRNA and the P site tRNA. Forms a bridge to the 30S subunit in the 70S ribosome.</text>
</comment>
<comment type="similarity">
    <text evidence="1">Belongs to the universal ribosomal protein uL5 family.</text>
</comment>
<feature type="chain" id="PRO_1000142363" description="Large ribosomal subunit protein uL5">
    <location>
        <begin position="1"/>
        <end position="179"/>
    </location>
</feature>
<evidence type="ECO:0000255" key="1">
    <source>
        <dbReference type="HAMAP-Rule" id="MF_01333"/>
    </source>
</evidence>
<evidence type="ECO:0000305" key="2"/>
<name>RL5_BURA4</name>
<proteinExistence type="inferred from homology"/>
<sequence>MARFQEFYKEKVVPGLIEKFGYKSVMEVPRITKITLNMGLGEAIADKKIIENAVGDLTKIAGQKPVVTKARKAIAGFKIRQGYPIGAMVTLRGRAMYEFLDRFVTVALPRVRDFRGVSGRAFDGRGNYNIGVKEQIIFPEIDYDKIDALRGLNISITTTAKTDDEAKALLASFKFPFRN</sequence>